<name>PITH1_DICDI</name>
<keyword id="KW-1185">Reference proteome</keyword>
<accession>Q54Z24</accession>
<reference key="1">
    <citation type="journal article" date="2005" name="Nature">
        <title>The genome of the social amoeba Dictyostelium discoideum.</title>
        <authorList>
            <person name="Eichinger L."/>
            <person name="Pachebat J.A."/>
            <person name="Gloeckner G."/>
            <person name="Rajandream M.A."/>
            <person name="Sucgang R."/>
            <person name="Berriman M."/>
            <person name="Song J."/>
            <person name="Olsen R."/>
            <person name="Szafranski K."/>
            <person name="Xu Q."/>
            <person name="Tunggal B."/>
            <person name="Kummerfeld S."/>
            <person name="Madera M."/>
            <person name="Konfortov B.A."/>
            <person name="Rivero F."/>
            <person name="Bankier A.T."/>
            <person name="Lehmann R."/>
            <person name="Hamlin N."/>
            <person name="Davies R."/>
            <person name="Gaudet P."/>
            <person name="Fey P."/>
            <person name="Pilcher K."/>
            <person name="Chen G."/>
            <person name="Saunders D."/>
            <person name="Sodergren E.J."/>
            <person name="Davis P."/>
            <person name="Kerhornou A."/>
            <person name="Nie X."/>
            <person name="Hall N."/>
            <person name="Anjard C."/>
            <person name="Hemphill L."/>
            <person name="Bason N."/>
            <person name="Farbrother P."/>
            <person name="Desany B."/>
            <person name="Just E."/>
            <person name="Morio T."/>
            <person name="Rost R."/>
            <person name="Churcher C.M."/>
            <person name="Cooper J."/>
            <person name="Haydock S."/>
            <person name="van Driessche N."/>
            <person name="Cronin A."/>
            <person name="Goodhead I."/>
            <person name="Muzny D.M."/>
            <person name="Mourier T."/>
            <person name="Pain A."/>
            <person name="Lu M."/>
            <person name="Harper D."/>
            <person name="Lindsay R."/>
            <person name="Hauser H."/>
            <person name="James K.D."/>
            <person name="Quiles M."/>
            <person name="Madan Babu M."/>
            <person name="Saito T."/>
            <person name="Buchrieser C."/>
            <person name="Wardroper A."/>
            <person name="Felder M."/>
            <person name="Thangavelu M."/>
            <person name="Johnson D."/>
            <person name="Knights A."/>
            <person name="Loulseged H."/>
            <person name="Mungall K.L."/>
            <person name="Oliver K."/>
            <person name="Price C."/>
            <person name="Quail M.A."/>
            <person name="Urushihara H."/>
            <person name="Hernandez J."/>
            <person name="Rabbinowitsch E."/>
            <person name="Steffen D."/>
            <person name="Sanders M."/>
            <person name="Ma J."/>
            <person name="Kohara Y."/>
            <person name="Sharp S."/>
            <person name="Simmonds M.N."/>
            <person name="Spiegler S."/>
            <person name="Tivey A."/>
            <person name="Sugano S."/>
            <person name="White B."/>
            <person name="Walker D."/>
            <person name="Woodward J.R."/>
            <person name="Winckler T."/>
            <person name="Tanaka Y."/>
            <person name="Shaulsky G."/>
            <person name="Schleicher M."/>
            <person name="Weinstock G.M."/>
            <person name="Rosenthal A."/>
            <person name="Cox E.C."/>
            <person name="Chisholm R.L."/>
            <person name="Gibbs R.A."/>
            <person name="Loomis W.F."/>
            <person name="Platzer M."/>
            <person name="Kay R.R."/>
            <person name="Williams J.G."/>
            <person name="Dear P.H."/>
            <person name="Noegel A.A."/>
            <person name="Barrell B.G."/>
            <person name="Kuspa A."/>
        </authorList>
    </citation>
    <scope>NUCLEOTIDE SEQUENCE [LARGE SCALE GENOMIC DNA]</scope>
    <source>
        <strain>AX4</strain>
    </source>
</reference>
<evidence type="ECO:0000255" key="1">
    <source>
        <dbReference type="PROSITE-ProRule" id="PRU00864"/>
    </source>
</evidence>
<evidence type="ECO:0000305" key="2"/>
<sequence length="202" mass="22740">MAHQCNDSSHSHGVDDGIEYSLNRYLDTGTITCLNEKVKGSVRHIFKSWEDRHDLKHFVESCDDEELIINIPFGAVTQIKSIIIIGGDGGSSPNKMKAYINNSNIDFGNINSFACTQEWNLHEDFEGQIGYSTKPTKFNNINHLTLYFPSNFGSPTTKIYFIALKGVYTSAKREIVNTVYESKPQLQDHKSDIFNGVSHDLS</sequence>
<comment type="similarity">
    <text evidence="2">Belongs to the PITHD1 family.</text>
</comment>
<proteinExistence type="inferred from homology"/>
<protein>
    <recommendedName>
        <fullName>PITH domain-containing protein 1</fullName>
    </recommendedName>
</protein>
<gene>
    <name type="ORF">DDB_G0277951</name>
</gene>
<dbReference type="EMBL" id="AAFI02000023">
    <property type="protein sequence ID" value="EAL68148.1"/>
    <property type="molecule type" value="Genomic_DNA"/>
</dbReference>
<dbReference type="RefSeq" id="XP_642028.1">
    <property type="nucleotide sequence ID" value="XM_636936.1"/>
</dbReference>
<dbReference type="SMR" id="Q54Z24"/>
<dbReference type="FunCoup" id="Q54Z24">
    <property type="interactions" value="275"/>
</dbReference>
<dbReference type="PaxDb" id="44689-DDB0302532"/>
<dbReference type="EnsemblProtists" id="EAL68148">
    <property type="protein sequence ID" value="EAL68148"/>
    <property type="gene ID" value="DDB_G0277951"/>
</dbReference>
<dbReference type="GeneID" id="8621239"/>
<dbReference type="KEGG" id="ddi:DDB_G0277951"/>
<dbReference type="dictyBase" id="DDB_G0277951"/>
<dbReference type="VEuPathDB" id="AmoebaDB:DDB_G0277951"/>
<dbReference type="eggNOG" id="KOG1730">
    <property type="taxonomic scope" value="Eukaryota"/>
</dbReference>
<dbReference type="HOGENOM" id="CLU_072377_2_0_1"/>
<dbReference type="InParanoid" id="Q54Z24"/>
<dbReference type="OMA" id="RLVFKPW"/>
<dbReference type="PhylomeDB" id="Q54Z24"/>
<dbReference type="PRO" id="PR:Q54Z24"/>
<dbReference type="Proteomes" id="UP000002195">
    <property type="component" value="Chromosome 3"/>
</dbReference>
<dbReference type="GO" id="GO:0005737">
    <property type="term" value="C:cytoplasm"/>
    <property type="evidence" value="ECO:0007669"/>
    <property type="project" value="UniProtKB-ARBA"/>
</dbReference>
<dbReference type="Gene3D" id="2.60.120.470">
    <property type="entry name" value="PITH domain"/>
    <property type="match status" value="1"/>
</dbReference>
<dbReference type="InterPro" id="IPR008979">
    <property type="entry name" value="Galactose-bd-like_sf"/>
</dbReference>
<dbReference type="InterPro" id="IPR045099">
    <property type="entry name" value="PITH1-like"/>
</dbReference>
<dbReference type="InterPro" id="IPR010400">
    <property type="entry name" value="PITH_dom"/>
</dbReference>
<dbReference type="InterPro" id="IPR037047">
    <property type="entry name" value="PITH_dom_sf"/>
</dbReference>
<dbReference type="PANTHER" id="PTHR12175">
    <property type="entry name" value="AD039 HT014 THIOREDOXIN FAMILY TRP26"/>
    <property type="match status" value="1"/>
</dbReference>
<dbReference type="PANTHER" id="PTHR12175:SF1">
    <property type="entry name" value="PITH DOMAIN-CONTAINING PROTEIN 1"/>
    <property type="match status" value="1"/>
</dbReference>
<dbReference type="Pfam" id="PF06201">
    <property type="entry name" value="PITH"/>
    <property type="match status" value="1"/>
</dbReference>
<dbReference type="SUPFAM" id="SSF49785">
    <property type="entry name" value="Galactose-binding domain-like"/>
    <property type="match status" value="1"/>
</dbReference>
<dbReference type="PROSITE" id="PS51532">
    <property type="entry name" value="PITH"/>
    <property type="match status" value="1"/>
</dbReference>
<organism>
    <name type="scientific">Dictyostelium discoideum</name>
    <name type="common">Social amoeba</name>
    <dbReference type="NCBI Taxonomy" id="44689"/>
    <lineage>
        <taxon>Eukaryota</taxon>
        <taxon>Amoebozoa</taxon>
        <taxon>Evosea</taxon>
        <taxon>Eumycetozoa</taxon>
        <taxon>Dictyostelia</taxon>
        <taxon>Dictyosteliales</taxon>
        <taxon>Dictyosteliaceae</taxon>
        <taxon>Dictyostelium</taxon>
    </lineage>
</organism>
<feature type="chain" id="PRO_0000339897" description="PITH domain-containing protein 1">
    <location>
        <begin position="1"/>
        <end position="202"/>
    </location>
</feature>
<feature type="domain" description="PITH" evidence="1">
    <location>
        <begin position="11"/>
        <end position="184"/>
    </location>
</feature>